<evidence type="ECO:0000250" key="1"/>
<evidence type="ECO:0000250" key="2">
    <source>
        <dbReference type="UniProtKB" id="P29022"/>
    </source>
</evidence>
<evidence type="ECO:0000255" key="3"/>
<evidence type="ECO:0000255" key="4">
    <source>
        <dbReference type="PROSITE-ProRule" id="PRU00261"/>
    </source>
</evidence>
<evidence type="ECO:0000305" key="5"/>
<feature type="signal peptide" evidence="3">
    <location>
        <begin position="1" status="less than"/>
        <end position="18"/>
    </location>
</feature>
<feature type="chain" id="PRO_0000005322" description="Endochitinase 2">
    <location>
        <begin position="19"/>
        <end position="309"/>
    </location>
</feature>
<feature type="propeptide" id="PRO_0000005323" description="Removed in mature form, vacuolar targeting" evidence="3">
    <location>
        <begin position="310"/>
        <end position="316"/>
    </location>
</feature>
<feature type="domain" description="Chitin-binding type-1" evidence="4">
    <location>
        <begin position="19"/>
        <end position="60"/>
    </location>
</feature>
<feature type="active site" description="Proton donor" evidence="2">
    <location>
        <position position="132"/>
    </location>
</feature>
<feature type="disulfide bond" evidence="4">
    <location>
        <begin position="21"/>
        <end position="36"/>
    </location>
</feature>
<feature type="disulfide bond" evidence="4">
    <location>
        <begin position="30"/>
        <end position="42"/>
    </location>
</feature>
<feature type="disulfide bond" evidence="4">
    <location>
        <begin position="35"/>
        <end position="49"/>
    </location>
</feature>
<feature type="disulfide bond" evidence="4">
    <location>
        <begin position="54"/>
        <end position="58"/>
    </location>
</feature>
<feature type="disulfide bond" evidence="4">
    <location>
        <begin position="87"/>
        <end position="150"/>
    </location>
</feature>
<feature type="disulfide bond" evidence="4">
    <location>
        <begin position="162"/>
        <end position="170"/>
    </location>
</feature>
<feature type="disulfide bond" evidence="4">
    <location>
        <begin position="269"/>
        <end position="301"/>
    </location>
</feature>
<feature type="non-terminal residue">
    <location>
        <position position="1"/>
    </location>
</feature>
<proteinExistence type="evidence at transcript level"/>
<sequence>EFTTLFLLFSVLLLSASAEQCGSQAGGALCASGLCCSKFGWCGNTNDYCGPGNCQSQCPGGSPGDLGGVISNSMFDQMLNHRNDNACQGKGNFYSYNAFISAAGSFPGFGTTGDITARKREIAAFFAQTSHETTGGWASAPDGPYAWGYCFLREQGSPGDYCTPSNQWPCAPGRKYFGRGPIQISHNYNYGPCGRAIGVDLLNNPDLVATDSIISFKSAIWFWMTPQSPKPSCHDVITGRWQPSGTDQAANRVPGFGVITNIINGGLECGHGSDSRVQDRIGFYRRYCGILGVSPGDNLDCGNQRSFGNGLLVDTV</sequence>
<organism>
    <name type="scientific">Solanum tuberosum</name>
    <name type="common">Potato</name>
    <dbReference type="NCBI Taxonomy" id="4113"/>
    <lineage>
        <taxon>Eukaryota</taxon>
        <taxon>Viridiplantae</taxon>
        <taxon>Streptophyta</taxon>
        <taxon>Embryophyta</taxon>
        <taxon>Tracheophyta</taxon>
        <taxon>Spermatophyta</taxon>
        <taxon>Magnoliopsida</taxon>
        <taxon>eudicotyledons</taxon>
        <taxon>Gunneridae</taxon>
        <taxon>Pentapetalae</taxon>
        <taxon>asterids</taxon>
        <taxon>lamiids</taxon>
        <taxon>Solanales</taxon>
        <taxon>Solanaceae</taxon>
        <taxon>Solanoideae</taxon>
        <taxon>Solaneae</taxon>
        <taxon>Solanum</taxon>
    </lineage>
</organism>
<dbReference type="EC" id="3.2.1.14"/>
<dbReference type="EMBL" id="U02606">
    <property type="protein sequence ID" value="AAA17408.1"/>
    <property type="molecule type" value="mRNA"/>
</dbReference>
<dbReference type="PIR" id="S65020">
    <property type="entry name" value="S65020"/>
</dbReference>
<dbReference type="SMR" id="P52404"/>
<dbReference type="FunCoup" id="P52404">
    <property type="interactions" value="211"/>
</dbReference>
<dbReference type="CAZy" id="CBM18">
    <property type="family name" value="Carbohydrate-Binding Module Family 18"/>
</dbReference>
<dbReference type="CAZy" id="GH19">
    <property type="family name" value="Glycoside Hydrolase Family 19"/>
</dbReference>
<dbReference type="PaxDb" id="4113-PGSC0003DMT400069033"/>
<dbReference type="eggNOG" id="KOG4742">
    <property type="taxonomic scope" value="Eukaryota"/>
</dbReference>
<dbReference type="InParanoid" id="P52404"/>
<dbReference type="Proteomes" id="UP000011115">
    <property type="component" value="Unassembled WGS sequence"/>
</dbReference>
<dbReference type="ExpressionAtlas" id="P52404">
    <property type="expression patterns" value="baseline"/>
</dbReference>
<dbReference type="GO" id="GO:0005773">
    <property type="term" value="C:vacuole"/>
    <property type="evidence" value="ECO:0007669"/>
    <property type="project" value="UniProtKB-SubCell"/>
</dbReference>
<dbReference type="GO" id="GO:0008061">
    <property type="term" value="F:chitin binding"/>
    <property type="evidence" value="ECO:0007669"/>
    <property type="project" value="UniProtKB-KW"/>
</dbReference>
<dbReference type="GO" id="GO:0004568">
    <property type="term" value="F:chitinase activity"/>
    <property type="evidence" value="ECO:0000318"/>
    <property type="project" value="GO_Central"/>
</dbReference>
<dbReference type="GO" id="GO:0008843">
    <property type="term" value="F:endochitinase activity"/>
    <property type="evidence" value="ECO:0007669"/>
    <property type="project" value="UniProtKB-EC"/>
</dbReference>
<dbReference type="GO" id="GO:0016998">
    <property type="term" value="P:cell wall macromolecule catabolic process"/>
    <property type="evidence" value="ECO:0007669"/>
    <property type="project" value="InterPro"/>
</dbReference>
<dbReference type="GO" id="GO:0006032">
    <property type="term" value="P:chitin catabolic process"/>
    <property type="evidence" value="ECO:0007669"/>
    <property type="project" value="UniProtKB-KW"/>
</dbReference>
<dbReference type="GO" id="GO:0006952">
    <property type="term" value="P:defense response"/>
    <property type="evidence" value="ECO:0007669"/>
    <property type="project" value="UniProtKB-KW"/>
</dbReference>
<dbReference type="GO" id="GO:0000272">
    <property type="term" value="P:polysaccharide catabolic process"/>
    <property type="evidence" value="ECO:0007669"/>
    <property type="project" value="UniProtKB-KW"/>
</dbReference>
<dbReference type="CDD" id="cd00325">
    <property type="entry name" value="chitinase_GH19"/>
    <property type="match status" value="1"/>
</dbReference>
<dbReference type="CDD" id="cd06921">
    <property type="entry name" value="ChtBD1_GH19_hevein"/>
    <property type="match status" value="1"/>
</dbReference>
<dbReference type="FunFam" id="3.30.60.10:FF:000001">
    <property type="entry name" value="Basic endochitinase"/>
    <property type="match status" value="1"/>
</dbReference>
<dbReference type="FunFam" id="3.30.20.10:FF:000001">
    <property type="entry name" value="Endochitinase (Chitinase)"/>
    <property type="match status" value="1"/>
</dbReference>
<dbReference type="Gene3D" id="1.10.530.10">
    <property type="match status" value="1"/>
</dbReference>
<dbReference type="Gene3D" id="3.30.20.10">
    <property type="entry name" value="Endochitinase, domain 2"/>
    <property type="match status" value="1"/>
</dbReference>
<dbReference type="Gene3D" id="3.30.60.10">
    <property type="entry name" value="Endochitinase-like"/>
    <property type="match status" value="1"/>
</dbReference>
<dbReference type="InterPro" id="IPR001002">
    <property type="entry name" value="Chitin-bd_1"/>
</dbReference>
<dbReference type="InterPro" id="IPR018371">
    <property type="entry name" value="Chitin-binding_1_CS"/>
</dbReference>
<dbReference type="InterPro" id="IPR036861">
    <property type="entry name" value="Endochitinase-like_sf"/>
</dbReference>
<dbReference type="InterPro" id="IPR016283">
    <property type="entry name" value="Glyco_hydro_19"/>
</dbReference>
<dbReference type="InterPro" id="IPR000726">
    <property type="entry name" value="Glyco_hydro_19_cat"/>
</dbReference>
<dbReference type="InterPro" id="IPR023346">
    <property type="entry name" value="Lysozyme-like_dom_sf"/>
</dbReference>
<dbReference type="PANTHER" id="PTHR22595:SF149">
    <property type="entry name" value="BASIC 30 KDA ENDOCHITINASE"/>
    <property type="match status" value="1"/>
</dbReference>
<dbReference type="PANTHER" id="PTHR22595">
    <property type="entry name" value="CHITINASE-RELATED"/>
    <property type="match status" value="1"/>
</dbReference>
<dbReference type="Pfam" id="PF00187">
    <property type="entry name" value="Chitin_bind_1"/>
    <property type="match status" value="1"/>
</dbReference>
<dbReference type="Pfam" id="PF00182">
    <property type="entry name" value="Glyco_hydro_19"/>
    <property type="match status" value="1"/>
</dbReference>
<dbReference type="PIRSF" id="PIRSF001060">
    <property type="entry name" value="Endochitinase"/>
    <property type="match status" value="1"/>
</dbReference>
<dbReference type="PRINTS" id="PR00451">
    <property type="entry name" value="CHITINBINDNG"/>
</dbReference>
<dbReference type="SMART" id="SM00270">
    <property type="entry name" value="ChtBD1"/>
    <property type="match status" value="1"/>
</dbReference>
<dbReference type="SUPFAM" id="SSF53955">
    <property type="entry name" value="Lysozyme-like"/>
    <property type="match status" value="1"/>
</dbReference>
<dbReference type="SUPFAM" id="SSF57016">
    <property type="entry name" value="Plant lectins/antimicrobial peptides"/>
    <property type="match status" value="1"/>
</dbReference>
<dbReference type="PROSITE" id="PS00026">
    <property type="entry name" value="CHIT_BIND_I_1"/>
    <property type="match status" value="1"/>
</dbReference>
<dbReference type="PROSITE" id="PS50941">
    <property type="entry name" value="CHIT_BIND_I_2"/>
    <property type="match status" value="1"/>
</dbReference>
<dbReference type="PROSITE" id="PS00773">
    <property type="entry name" value="CHITINASE_19_1"/>
    <property type="match status" value="1"/>
</dbReference>
<dbReference type="PROSITE" id="PS00774">
    <property type="entry name" value="CHITINASE_19_2"/>
    <property type="match status" value="1"/>
</dbReference>
<accession>P52404</accession>
<reference key="1">
    <citation type="journal article" date="1994" name="Plant Mol. Biol.">
        <title>Primary structure and expression of mRNAs encoding basic chitinase and 1,3-beta-glucanase in potato.</title>
        <authorList>
            <person name="Beerhues L."/>
            <person name="Kombrink E."/>
        </authorList>
    </citation>
    <scope>NUCLEOTIDE SEQUENCE [MRNA]</scope>
    <source>
        <strain>cv. Datura</strain>
        <tissue>Leaf</tissue>
    </source>
</reference>
<gene>
    <name type="primary">CHTB2</name>
</gene>
<comment type="function">
    <text>Defense against chitin-containing fungal pathogens.</text>
</comment>
<comment type="catalytic activity">
    <reaction>
        <text>Random endo-hydrolysis of N-acetyl-beta-D-glucosaminide (1-&gt;4)-beta-linkages in chitin and chitodextrins.</text>
        <dbReference type="EC" id="3.2.1.14"/>
    </reaction>
</comment>
<comment type="subcellular location">
    <subcellularLocation>
        <location evidence="1">Vacuole</location>
    </subcellularLocation>
    <text evidence="1">Vacuolar and protoplast.</text>
</comment>
<comment type="developmental stage">
    <text>Highest levels in younger leaves or stems segments and in older ones. Leaves and stems of intermediate age show a decreased expression. Appreciable amounts are also found in old root segments, and carpels.</text>
</comment>
<comment type="induction">
    <text>In response to infection, elicitor, ethylene, wounding.</text>
</comment>
<comment type="similarity">
    <text evidence="5">Belongs to the glycosyl hydrolase 19 family. Chitinase class I subfamily.</text>
</comment>
<protein>
    <recommendedName>
        <fullName>Endochitinase 2</fullName>
        <ecNumber>3.2.1.14</ecNumber>
    </recommendedName>
</protein>
<name>CHI2_SOLTU</name>
<keyword id="KW-0119">Carbohydrate metabolism</keyword>
<keyword id="KW-0146">Chitin degradation</keyword>
<keyword id="KW-0147">Chitin-binding</keyword>
<keyword id="KW-1015">Disulfide bond</keyword>
<keyword id="KW-0326">Glycosidase</keyword>
<keyword id="KW-0378">Hydrolase</keyword>
<keyword id="KW-0611">Plant defense</keyword>
<keyword id="KW-0624">Polysaccharide degradation</keyword>
<keyword id="KW-1185">Reference proteome</keyword>
<keyword id="KW-0732">Signal</keyword>
<keyword id="KW-0926">Vacuole</keyword>